<reference key="1">
    <citation type="journal article" date="2006" name="J. Bacteriol.">
        <title>Complete genome sequence of Yersinia pestis strains Antiqua and Nepal516: evidence of gene reduction in an emerging pathogen.</title>
        <authorList>
            <person name="Chain P.S.G."/>
            <person name="Hu P."/>
            <person name="Malfatti S.A."/>
            <person name="Radnedge L."/>
            <person name="Larimer F."/>
            <person name="Vergez L.M."/>
            <person name="Worsham P."/>
            <person name="Chu M.C."/>
            <person name="Andersen G.L."/>
        </authorList>
    </citation>
    <scope>NUCLEOTIDE SEQUENCE [LARGE SCALE GENOMIC DNA]</scope>
    <source>
        <strain>Nepal516</strain>
    </source>
</reference>
<reference key="2">
    <citation type="submission" date="2009-04" db="EMBL/GenBank/DDBJ databases">
        <title>Yersinia pestis Nepal516A whole genome shotgun sequencing project.</title>
        <authorList>
            <person name="Plunkett G. III"/>
            <person name="Anderson B.D."/>
            <person name="Baumler D.J."/>
            <person name="Burland V."/>
            <person name="Cabot E.L."/>
            <person name="Glasner J.D."/>
            <person name="Mau B."/>
            <person name="Neeno-Eckwall E."/>
            <person name="Perna N.T."/>
            <person name="Munk A.C."/>
            <person name="Tapia R."/>
            <person name="Green L.D."/>
            <person name="Rogers Y.C."/>
            <person name="Detter J.C."/>
            <person name="Bruce D.C."/>
            <person name="Brettin T.S."/>
        </authorList>
    </citation>
    <scope>NUCLEOTIDE SEQUENCE [LARGE SCALE GENOMIC DNA]</scope>
    <source>
        <strain>Nepal516</strain>
    </source>
</reference>
<feature type="chain" id="PRO_0000288251" description="tRNA (guanine-N(7)-)-methyltransferase">
    <location>
        <begin position="1"/>
        <end position="239"/>
    </location>
</feature>
<feature type="region of interest" description="Interaction with RNA" evidence="2">
    <location>
        <begin position="150"/>
        <end position="155"/>
    </location>
</feature>
<feature type="active site" evidence="1">
    <location>
        <position position="144"/>
    </location>
</feature>
<feature type="binding site" evidence="2">
    <location>
        <position position="69"/>
    </location>
    <ligand>
        <name>S-adenosyl-L-methionine</name>
        <dbReference type="ChEBI" id="CHEBI:59789"/>
    </ligand>
</feature>
<feature type="binding site" evidence="2">
    <location>
        <position position="94"/>
    </location>
    <ligand>
        <name>S-adenosyl-L-methionine</name>
        <dbReference type="ChEBI" id="CHEBI:59789"/>
    </ligand>
</feature>
<feature type="binding site" evidence="2">
    <location>
        <position position="121"/>
    </location>
    <ligand>
        <name>S-adenosyl-L-methionine</name>
        <dbReference type="ChEBI" id="CHEBI:59789"/>
    </ligand>
</feature>
<feature type="binding site" evidence="2">
    <location>
        <position position="144"/>
    </location>
    <ligand>
        <name>S-adenosyl-L-methionine</name>
        <dbReference type="ChEBI" id="CHEBI:59789"/>
    </ligand>
</feature>
<feature type="binding site" evidence="2">
    <location>
        <position position="148"/>
    </location>
    <ligand>
        <name>substrate</name>
    </ligand>
</feature>
<feature type="binding site" evidence="2">
    <location>
        <position position="180"/>
    </location>
    <ligand>
        <name>substrate</name>
    </ligand>
</feature>
<feature type="binding site" evidence="2">
    <location>
        <begin position="217"/>
        <end position="220"/>
    </location>
    <ligand>
        <name>substrate</name>
    </ligand>
</feature>
<comment type="function">
    <text evidence="2">Catalyzes the formation of N(7)-methylguanine at position 46 (m7G46) in tRNA.</text>
</comment>
<comment type="catalytic activity">
    <reaction evidence="2">
        <text>guanosine(46) in tRNA + S-adenosyl-L-methionine = N(7)-methylguanosine(46) in tRNA + S-adenosyl-L-homocysteine</text>
        <dbReference type="Rhea" id="RHEA:42708"/>
        <dbReference type="Rhea" id="RHEA-COMP:10188"/>
        <dbReference type="Rhea" id="RHEA-COMP:10189"/>
        <dbReference type="ChEBI" id="CHEBI:57856"/>
        <dbReference type="ChEBI" id="CHEBI:59789"/>
        <dbReference type="ChEBI" id="CHEBI:74269"/>
        <dbReference type="ChEBI" id="CHEBI:74480"/>
        <dbReference type="EC" id="2.1.1.33"/>
    </reaction>
</comment>
<comment type="pathway">
    <text evidence="2">tRNA modification; N(7)-methylguanine-tRNA biosynthesis.</text>
</comment>
<comment type="subunit">
    <text evidence="2">Monomer.</text>
</comment>
<comment type="similarity">
    <text evidence="2">Belongs to the class I-like SAM-binding methyltransferase superfamily. TrmB family.</text>
</comment>
<accession>Q1CEV4</accession>
<accession>C4GXJ5</accession>
<protein>
    <recommendedName>
        <fullName evidence="2">tRNA (guanine-N(7)-)-methyltransferase</fullName>
        <ecNumber evidence="2">2.1.1.33</ecNumber>
    </recommendedName>
    <alternativeName>
        <fullName evidence="2">tRNA (guanine(46)-N(7))-methyltransferase</fullName>
    </alternativeName>
    <alternativeName>
        <fullName evidence="2">tRNA(m7G46)-methyltransferase</fullName>
    </alternativeName>
</protein>
<keyword id="KW-0489">Methyltransferase</keyword>
<keyword id="KW-0949">S-adenosyl-L-methionine</keyword>
<keyword id="KW-0808">Transferase</keyword>
<keyword id="KW-0819">tRNA processing</keyword>
<gene>
    <name evidence="2" type="primary">trmB</name>
    <name type="ordered locus">YPN_3149</name>
    <name type="ORF">YP516_3576</name>
</gene>
<dbReference type="EC" id="2.1.1.33" evidence="2"/>
<dbReference type="EMBL" id="CP000305">
    <property type="protein sequence ID" value="ABG19476.1"/>
    <property type="molecule type" value="Genomic_DNA"/>
</dbReference>
<dbReference type="EMBL" id="ACNQ01000017">
    <property type="protein sequence ID" value="EEO75645.1"/>
    <property type="molecule type" value="Genomic_DNA"/>
</dbReference>
<dbReference type="RefSeq" id="WP_002209991.1">
    <property type="nucleotide sequence ID" value="NZ_ACNQ01000017.1"/>
</dbReference>
<dbReference type="SMR" id="Q1CEV4"/>
<dbReference type="GeneID" id="57973690"/>
<dbReference type="KEGG" id="ypn:YPN_3149"/>
<dbReference type="HOGENOM" id="CLU_050910_0_1_6"/>
<dbReference type="UniPathway" id="UPA00989"/>
<dbReference type="Proteomes" id="UP000008936">
    <property type="component" value="Chromosome"/>
</dbReference>
<dbReference type="GO" id="GO:0043527">
    <property type="term" value="C:tRNA methyltransferase complex"/>
    <property type="evidence" value="ECO:0007669"/>
    <property type="project" value="TreeGrafter"/>
</dbReference>
<dbReference type="GO" id="GO:0008176">
    <property type="term" value="F:tRNA (guanine(46)-N7)-methyltransferase activity"/>
    <property type="evidence" value="ECO:0007669"/>
    <property type="project" value="UniProtKB-UniRule"/>
</dbReference>
<dbReference type="FunFam" id="3.40.50.150:FF:000024">
    <property type="entry name" value="tRNA (guanine-N(7)-)-methyltransferase"/>
    <property type="match status" value="1"/>
</dbReference>
<dbReference type="Gene3D" id="3.40.50.150">
    <property type="entry name" value="Vaccinia Virus protein VP39"/>
    <property type="match status" value="1"/>
</dbReference>
<dbReference type="HAMAP" id="MF_01057">
    <property type="entry name" value="tRNA_methyltr_TrmB"/>
    <property type="match status" value="1"/>
</dbReference>
<dbReference type="InterPro" id="IPR029063">
    <property type="entry name" value="SAM-dependent_MTases_sf"/>
</dbReference>
<dbReference type="InterPro" id="IPR003358">
    <property type="entry name" value="tRNA_(Gua-N-7)_MeTrfase_Trmb"/>
</dbReference>
<dbReference type="InterPro" id="IPR055361">
    <property type="entry name" value="tRNA_methyltr_TrmB_bact"/>
</dbReference>
<dbReference type="NCBIfam" id="TIGR00091">
    <property type="entry name" value="tRNA (guanosine(46)-N7)-methyltransferase TrmB"/>
    <property type="match status" value="1"/>
</dbReference>
<dbReference type="PANTHER" id="PTHR23417">
    <property type="entry name" value="3-DEOXY-D-MANNO-OCTULOSONIC-ACID TRANSFERASE/TRNA GUANINE-N 7 - -METHYLTRANSFERASE"/>
    <property type="match status" value="1"/>
</dbReference>
<dbReference type="PANTHER" id="PTHR23417:SF14">
    <property type="entry name" value="PENTACOTRIPEPTIDE-REPEAT REGION OF PRORP DOMAIN-CONTAINING PROTEIN"/>
    <property type="match status" value="1"/>
</dbReference>
<dbReference type="Pfam" id="PF02390">
    <property type="entry name" value="Methyltransf_4"/>
    <property type="match status" value="1"/>
</dbReference>
<dbReference type="SUPFAM" id="SSF53335">
    <property type="entry name" value="S-adenosyl-L-methionine-dependent methyltransferases"/>
    <property type="match status" value="1"/>
</dbReference>
<dbReference type="PROSITE" id="PS51625">
    <property type="entry name" value="SAM_MT_TRMB"/>
    <property type="match status" value="1"/>
</dbReference>
<organism>
    <name type="scientific">Yersinia pestis bv. Antiqua (strain Nepal516)</name>
    <dbReference type="NCBI Taxonomy" id="377628"/>
    <lineage>
        <taxon>Bacteria</taxon>
        <taxon>Pseudomonadati</taxon>
        <taxon>Pseudomonadota</taxon>
        <taxon>Gammaproteobacteria</taxon>
        <taxon>Enterobacterales</taxon>
        <taxon>Yersiniaceae</taxon>
        <taxon>Yersinia</taxon>
    </lineage>
</organism>
<sequence length="239" mass="27019">MINDVISPEFDENGRALRRIRSFVRRQGRLTKGQQLALDSYWPVMGVEYQAAPVDLNTLFGREAPIVLEIGFGMGTSLVTMATNNPQQNFLGIEVHSPGVGACLSSAHDAGLSNLRIMCHDAVEVLENMIPEASLDMVQLFFPDPWHKARHNKRRIVQTPFVELVKSKLKVGGVFHMATDWQPYAEHMLEVMSGVSGYLNLSEQNDYVPRPDSRPLTKFELRGQRLGHGVWDLMFERKE</sequence>
<proteinExistence type="inferred from homology"/>
<evidence type="ECO:0000250" key="1"/>
<evidence type="ECO:0000255" key="2">
    <source>
        <dbReference type="HAMAP-Rule" id="MF_01057"/>
    </source>
</evidence>
<name>TRMB_YERPN</name>